<protein>
    <recommendedName>
        <fullName>DEAD-box ATP-dependent RNA helicase 35B</fullName>
        <ecNumber>3.6.4.13</ecNumber>
    </recommendedName>
</protein>
<feature type="chain" id="PRO_0000282499" description="DEAD-box ATP-dependent RNA helicase 35B">
    <location>
        <begin position="1"/>
        <end position="619"/>
    </location>
</feature>
<feature type="domain" description="Helicase ATP-binding" evidence="1">
    <location>
        <begin position="204"/>
        <end position="388"/>
    </location>
</feature>
<feature type="domain" description="Helicase C-terminal" evidence="2">
    <location>
        <begin position="399"/>
        <end position="559"/>
    </location>
</feature>
<feature type="zinc finger region" description="CCHC-type">
    <location>
        <begin position="576"/>
        <end position="593"/>
    </location>
</feature>
<feature type="region of interest" description="Disordered" evidence="3">
    <location>
        <begin position="1"/>
        <end position="72"/>
    </location>
</feature>
<feature type="short sequence motif" description="Q motif">
    <location>
        <begin position="173"/>
        <end position="201"/>
    </location>
</feature>
<feature type="short sequence motif" description="DEAD box">
    <location>
        <begin position="336"/>
        <end position="339"/>
    </location>
</feature>
<feature type="compositionally biased region" description="Low complexity" evidence="3">
    <location>
        <begin position="1"/>
        <end position="10"/>
    </location>
</feature>
<feature type="compositionally biased region" description="Low complexity" evidence="3">
    <location>
        <begin position="49"/>
        <end position="58"/>
    </location>
</feature>
<feature type="binding site" evidence="1">
    <location>
        <begin position="217"/>
        <end position="224"/>
    </location>
    <ligand>
        <name>ATP</name>
        <dbReference type="ChEBI" id="CHEBI:30616"/>
    </ligand>
</feature>
<sequence length="619" mass="68144">MAAAAAAAAAGDSPRRGTPDSDEEDYEEYVPVAKRRAMEAERLRRATKPPTTNAVAVAAPPPPPRSTSSPAVGEVAVKTSLLVKATKLKREAPEVTPAERLLQQEREMIEHLSDRKALMPVGEIAKGISYSEPITTGWRPPLRLRRMPRSRADALRRSWHILVDGDDVPPPSRSFGDLRLPEPILRALRGKGIEKPTPIQVQGLPVALSGRDMIGIAFTGSGKTLVFVLPLIMAALQEEILMPIVPGEGPFGLIVCPSRELARQTHEVIEMFLAPLMEAGYPEIRPLLCIGGVDMRTQMEVVKKGVHIVVATPGRLKDLLSKKKMNLDNCRYLTLDEADRLVDLGFEDDIREVFDHFKAQRQTLLFSATMPEKIQNFAKSALVKPIIVNVGRAGAANLDVIQEVEYVKEEARIIYLLECLQKTPPPVLVFCEHKADVDYIQEFLLLKGVEAVAIHGGKDDEERKDAFKSFKASEKDVLVATDVASKGLDIPDIQHVINYDMPAEIENYVHRIGRTGRRGKTGVATTFINKNQTETTLLDLKQLLIESKQRLPPILADLDDPQEDDKVAIAQQSGVKGCAFCGGLGHRIEACPKQQLQNSVTLARARSDYFGGGGYRGEI</sequence>
<keyword id="KW-0067">ATP-binding</keyword>
<keyword id="KW-0347">Helicase</keyword>
<keyword id="KW-0378">Hydrolase</keyword>
<keyword id="KW-0479">Metal-binding</keyword>
<keyword id="KW-0547">Nucleotide-binding</keyword>
<keyword id="KW-1185">Reference proteome</keyword>
<keyword id="KW-0694">RNA-binding</keyword>
<keyword id="KW-0862">Zinc</keyword>
<keyword id="KW-0863">Zinc-finger</keyword>
<dbReference type="EC" id="3.6.4.13"/>
<dbReference type="EMBL" id="AP005445">
    <property type="protein sequence ID" value="BAD54454.1"/>
    <property type="molecule type" value="Genomic_DNA"/>
</dbReference>
<dbReference type="EMBL" id="AP008212">
    <property type="protein sequence ID" value="BAF20374.2"/>
    <property type="status" value="ALT_SEQ"/>
    <property type="molecule type" value="Genomic_DNA"/>
</dbReference>
<dbReference type="EMBL" id="AP014962">
    <property type="protein sequence ID" value="BAS99296.1"/>
    <property type="molecule type" value="Genomic_DNA"/>
</dbReference>
<dbReference type="EMBL" id="CM000143">
    <property type="protein sequence ID" value="EAZ38145.1"/>
    <property type="molecule type" value="Genomic_DNA"/>
</dbReference>
<dbReference type="RefSeq" id="XP_015641765.1">
    <property type="nucleotide sequence ID" value="XM_015786279.1"/>
</dbReference>
<dbReference type="SMR" id="Q5Z6G5"/>
<dbReference type="FunCoup" id="Q5Z6G5">
    <property type="interactions" value="1588"/>
</dbReference>
<dbReference type="STRING" id="39947.Q5Z6G5"/>
<dbReference type="PaxDb" id="39947-Q5Z6G5"/>
<dbReference type="EnsemblPlants" id="Os06t0697200-00">
    <property type="protein sequence ID" value="Os06t0697200-00"/>
    <property type="gene ID" value="Os06g0697200"/>
</dbReference>
<dbReference type="Gramene" id="Os06t0697200-00">
    <property type="protein sequence ID" value="Os06t0697200-00"/>
    <property type="gene ID" value="Os06g0697200"/>
</dbReference>
<dbReference type="KEGG" id="dosa:Os06g0697200"/>
<dbReference type="eggNOG" id="KOG0341">
    <property type="taxonomic scope" value="Eukaryota"/>
</dbReference>
<dbReference type="HOGENOM" id="CLU_003041_16_5_1"/>
<dbReference type="InParanoid" id="Q5Z6G5"/>
<dbReference type="OMA" id="GHRIEAC"/>
<dbReference type="OrthoDB" id="196131at2759"/>
<dbReference type="Proteomes" id="UP000000763">
    <property type="component" value="Chromosome 6"/>
</dbReference>
<dbReference type="Proteomes" id="UP000007752">
    <property type="component" value="Chromosome 6"/>
</dbReference>
<dbReference type="Proteomes" id="UP000059680">
    <property type="component" value="Chromosome 6"/>
</dbReference>
<dbReference type="GO" id="GO:0005681">
    <property type="term" value="C:spliceosomal complex"/>
    <property type="evidence" value="ECO:0000318"/>
    <property type="project" value="GO_Central"/>
</dbReference>
<dbReference type="GO" id="GO:0005524">
    <property type="term" value="F:ATP binding"/>
    <property type="evidence" value="ECO:0007669"/>
    <property type="project" value="UniProtKB-KW"/>
</dbReference>
<dbReference type="GO" id="GO:0016887">
    <property type="term" value="F:ATP hydrolysis activity"/>
    <property type="evidence" value="ECO:0007669"/>
    <property type="project" value="RHEA"/>
</dbReference>
<dbReference type="GO" id="GO:0003729">
    <property type="term" value="F:mRNA binding"/>
    <property type="evidence" value="ECO:0000318"/>
    <property type="project" value="GO_Central"/>
</dbReference>
<dbReference type="GO" id="GO:0003724">
    <property type="term" value="F:RNA helicase activity"/>
    <property type="evidence" value="ECO:0000318"/>
    <property type="project" value="GO_Central"/>
</dbReference>
<dbReference type="GO" id="GO:0008270">
    <property type="term" value="F:zinc ion binding"/>
    <property type="evidence" value="ECO:0007669"/>
    <property type="project" value="UniProtKB-KW"/>
</dbReference>
<dbReference type="GO" id="GO:0000398">
    <property type="term" value="P:mRNA splicing, via spliceosome"/>
    <property type="evidence" value="ECO:0000318"/>
    <property type="project" value="GO_Central"/>
</dbReference>
<dbReference type="CDD" id="cd17951">
    <property type="entry name" value="DEADc_DDX41"/>
    <property type="match status" value="1"/>
</dbReference>
<dbReference type="CDD" id="cd18787">
    <property type="entry name" value="SF2_C_DEAD"/>
    <property type="match status" value="1"/>
</dbReference>
<dbReference type="FunFam" id="3.40.50.300:FF:000449">
    <property type="entry name" value="Probable ATP-dependent RNA helicase DDX41"/>
    <property type="match status" value="1"/>
</dbReference>
<dbReference type="FunFam" id="3.40.50.300:FF:000657">
    <property type="entry name" value="Probable ATP-dependent RNA helicase DDX41"/>
    <property type="match status" value="1"/>
</dbReference>
<dbReference type="Gene3D" id="3.40.50.300">
    <property type="entry name" value="P-loop containing nucleotide triphosphate hydrolases"/>
    <property type="match status" value="2"/>
</dbReference>
<dbReference type="InterPro" id="IPR011545">
    <property type="entry name" value="DEAD/DEAH_box_helicase_dom"/>
</dbReference>
<dbReference type="InterPro" id="IPR044113">
    <property type="entry name" value="DEADc_DDX41"/>
</dbReference>
<dbReference type="InterPro" id="IPR014001">
    <property type="entry name" value="Helicase_ATP-bd"/>
</dbReference>
<dbReference type="InterPro" id="IPR001650">
    <property type="entry name" value="Helicase_C-like"/>
</dbReference>
<dbReference type="InterPro" id="IPR027417">
    <property type="entry name" value="P-loop_NTPase"/>
</dbReference>
<dbReference type="InterPro" id="IPR014014">
    <property type="entry name" value="RNA_helicase_DEAD_Q_motif"/>
</dbReference>
<dbReference type="PANTHER" id="PTHR47958">
    <property type="entry name" value="ATP-DEPENDENT RNA HELICASE DBP3"/>
    <property type="match status" value="1"/>
</dbReference>
<dbReference type="Pfam" id="PF00270">
    <property type="entry name" value="DEAD"/>
    <property type="match status" value="1"/>
</dbReference>
<dbReference type="Pfam" id="PF00271">
    <property type="entry name" value="Helicase_C"/>
    <property type="match status" value="1"/>
</dbReference>
<dbReference type="SMART" id="SM00487">
    <property type="entry name" value="DEXDc"/>
    <property type="match status" value="1"/>
</dbReference>
<dbReference type="SMART" id="SM00490">
    <property type="entry name" value="HELICc"/>
    <property type="match status" value="1"/>
</dbReference>
<dbReference type="SUPFAM" id="SSF52540">
    <property type="entry name" value="P-loop containing nucleoside triphosphate hydrolases"/>
    <property type="match status" value="1"/>
</dbReference>
<dbReference type="PROSITE" id="PS51192">
    <property type="entry name" value="HELICASE_ATP_BIND_1"/>
    <property type="match status" value="1"/>
</dbReference>
<dbReference type="PROSITE" id="PS51194">
    <property type="entry name" value="HELICASE_CTER"/>
    <property type="match status" value="1"/>
</dbReference>
<dbReference type="PROSITE" id="PS51195">
    <property type="entry name" value="Q_MOTIF"/>
    <property type="match status" value="1"/>
</dbReference>
<organism>
    <name type="scientific">Oryza sativa subsp. japonica</name>
    <name type="common">Rice</name>
    <dbReference type="NCBI Taxonomy" id="39947"/>
    <lineage>
        <taxon>Eukaryota</taxon>
        <taxon>Viridiplantae</taxon>
        <taxon>Streptophyta</taxon>
        <taxon>Embryophyta</taxon>
        <taxon>Tracheophyta</taxon>
        <taxon>Spermatophyta</taxon>
        <taxon>Magnoliopsida</taxon>
        <taxon>Liliopsida</taxon>
        <taxon>Poales</taxon>
        <taxon>Poaceae</taxon>
        <taxon>BOP clade</taxon>
        <taxon>Oryzoideae</taxon>
        <taxon>Oryzeae</taxon>
        <taxon>Oryzinae</taxon>
        <taxon>Oryza</taxon>
        <taxon>Oryza sativa</taxon>
    </lineage>
</organism>
<evidence type="ECO:0000255" key="1">
    <source>
        <dbReference type="PROSITE-ProRule" id="PRU00541"/>
    </source>
</evidence>
<evidence type="ECO:0000255" key="2">
    <source>
        <dbReference type="PROSITE-ProRule" id="PRU00542"/>
    </source>
</evidence>
<evidence type="ECO:0000256" key="3">
    <source>
        <dbReference type="SAM" id="MobiDB-lite"/>
    </source>
</evidence>
<evidence type="ECO:0000305" key="4"/>
<comment type="catalytic activity">
    <reaction>
        <text>ATP + H2O = ADP + phosphate + H(+)</text>
        <dbReference type="Rhea" id="RHEA:13065"/>
        <dbReference type="ChEBI" id="CHEBI:15377"/>
        <dbReference type="ChEBI" id="CHEBI:15378"/>
        <dbReference type="ChEBI" id="CHEBI:30616"/>
        <dbReference type="ChEBI" id="CHEBI:43474"/>
        <dbReference type="ChEBI" id="CHEBI:456216"/>
        <dbReference type="EC" id="3.6.4.13"/>
    </reaction>
</comment>
<comment type="domain">
    <text>The Q motif is unique to and characteristic of the DEAD box family of RNA helicases and controls ATP binding and hydrolysis.</text>
</comment>
<comment type="similarity">
    <text evidence="4">Belongs to the DEAD box helicase family. DDX41 subfamily.</text>
</comment>
<comment type="sequence caution" evidence="4">
    <conflict type="erroneous gene model prediction">
        <sequence resource="EMBL-CDS" id="BAF20374"/>
    </conflict>
</comment>
<accession>Q5Z6G5</accession>
<accession>A0A0P0X0D6</accession>
<reference key="1">
    <citation type="journal article" date="2005" name="Nature">
        <title>The map-based sequence of the rice genome.</title>
        <authorList>
            <consortium name="International rice genome sequencing project (IRGSP)"/>
        </authorList>
    </citation>
    <scope>NUCLEOTIDE SEQUENCE [LARGE SCALE GENOMIC DNA]</scope>
    <source>
        <strain>cv. Nipponbare</strain>
    </source>
</reference>
<reference key="2">
    <citation type="journal article" date="2008" name="Nucleic Acids Res.">
        <title>The rice annotation project database (RAP-DB): 2008 update.</title>
        <authorList>
            <consortium name="The rice annotation project (RAP)"/>
        </authorList>
    </citation>
    <scope>GENOME REANNOTATION</scope>
    <source>
        <strain>cv. Nipponbare</strain>
    </source>
</reference>
<reference key="3">
    <citation type="journal article" date="2013" name="Rice">
        <title>Improvement of the Oryza sativa Nipponbare reference genome using next generation sequence and optical map data.</title>
        <authorList>
            <person name="Kawahara Y."/>
            <person name="de la Bastide M."/>
            <person name="Hamilton J.P."/>
            <person name="Kanamori H."/>
            <person name="McCombie W.R."/>
            <person name="Ouyang S."/>
            <person name="Schwartz D.C."/>
            <person name="Tanaka T."/>
            <person name="Wu J."/>
            <person name="Zhou S."/>
            <person name="Childs K.L."/>
            <person name="Davidson R.M."/>
            <person name="Lin H."/>
            <person name="Quesada-Ocampo L."/>
            <person name="Vaillancourt B."/>
            <person name="Sakai H."/>
            <person name="Lee S.S."/>
            <person name="Kim J."/>
            <person name="Numa H."/>
            <person name="Itoh T."/>
            <person name="Buell C.R."/>
            <person name="Matsumoto T."/>
        </authorList>
    </citation>
    <scope>GENOME REANNOTATION</scope>
    <source>
        <strain>cv. Nipponbare</strain>
    </source>
</reference>
<reference key="4">
    <citation type="journal article" date="2005" name="PLoS Biol.">
        <title>The genomes of Oryza sativa: a history of duplications.</title>
        <authorList>
            <person name="Yu J."/>
            <person name="Wang J."/>
            <person name="Lin W."/>
            <person name="Li S."/>
            <person name="Li H."/>
            <person name="Zhou J."/>
            <person name="Ni P."/>
            <person name="Dong W."/>
            <person name="Hu S."/>
            <person name="Zeng C."/>
            <person name="Zhang J."/>
            <person name="Zhang Y."/>
            <person name="Li R."/>
            <person name="Xu Z."/>
            <person name="Li S."/>
            <person name="Li X."/>
            <person name="Zheng H."/>
            <person name="Cong L."/>
            <person name="Lin L."/>
            <person name="Yin J."/>
            <person name="Geng J."/>
            <person name="Li G."/>
            <person name="Shi J."/>
            <person name="Liu J."/>
            <person name="Lv H."/>
            <person name="Li J."/>
            <person name="Wang J."/>
            <person name="Deng Y."/>
            <person name="Ran L."/>
            <person name="Shi X."/>
            <person name="Wang X."/>
            <person name="Wu Q."/>
            <person name="Li C."/>
            <person name="Ren X."/>
            <person name="Wang J."/>
            <person name="Wang X."/>
            <person name="Li D."/>
            <person name="Liu D."/>
            <person name="Zhang X."/>
            <person name="Ji Z."/>
            <person name="Zhao W."/>
            <person name="Sun Y."/>
            <person name="Zhang Z."/>
            <person name="Bao J."/>
            <person name="Han Y."/>
            <person name="Dong L."/>
            <person name="Ji J."/>
            <person name="Chen P."/>
            <person name="Wu S."/>
            <person name="Liu J."/>
            <person name="Xiao Y."/>
            <person name="Bu D."/>
            <person name="Tan J."/>
            <person name="Yang L."/>
            <person name="Ye C."/>
            <person name="Zhang J."/>
            <person name="Xu J."/>
            <person name="Zhou Y."/>
            <person name="Yu Y."/>
            <person name="Zhang B."/>
            <person name="Zhuang S."/>
            <person name="Wei H."/>
            <person name="Liu B."/>
            <person name="Lei M."/>
            <person name="Yu H."/>
            <person name="Li Y."/>
            <person name="Xu H."/>
            <person name="Wei S."/>
            <person name="He X."/>
            <person name="Fang L."/>
            <person name="Zhang Z."/>
            <person name="Zhang Y."/>
            <person name="Huang X."/>
            <person name="Su Z."/>
            <person name="Tong W."/>
            <person name="Li J."/>
            <person name="Tong Z."/>
            <person name="Li S."/>
            <person name="Ye J."/>
            <person name="Wang L."/>
            <person name="Fang L."/>
            <person name="Lei T."/>
            <person name="Chen C.-S."/>
            <person name="Chen H.-C."/>
            <person name="Xu Z."/>
            <person name="Li H."/>
            <person name="Huang H."/>
            <person name="Zhang F."/>
            <person name="Xu H."/>
            <person name="Li N."/>
            <person name="Zhao C."/>
            <person name="Li S."/>
            <person name="Dong L."/>
            <person name="Huang Y."/>
            <person name="Li L."/>
            <person name="Xi Y."/>
            <person name="Qi Q."/>
            <person name="Li W."/>
            <person name="Zhang B."/>
            <person name="Hu W."/>
            <person name="Zhang Y."/>
            <person name="Tian X."/>
            <person name="Jiao Y."/>
            <person name="Liang X."/>
            <person name="Jin J."/>
            <person name="Gao L."/>
            <person name="Zheng W."/>
            <person name="Hao B."/>
            <person name="Liu S.-M."/>
            <person name="Wang W."/>
            <person name="Yuan L."/>
            <person name="Cao M."/>
            <person name="McDermott J."/>
            <person name="Samudrala R."/>
            <person name="Wang J."/>
            <person name="Wong G.K.-S."/>
            <person name="Yang H."/>
        </authorList>
    </citation>
    <scope>NUCLEOTIDE SEQUENCE [LARGE SCALE GENOMIC DNA]</scope>
    <source>
        <strain>cv. Nipponbare</strain>
    </source>
</reference>
<gene>
    <name type="ordered locus">Os06g0697200</name>
    <name type="ordered locus">LOC_Os06g48210</name>
    <name type="ORF">OsJ_22496</name>
    <name type="ORF">P0028E05.25</name>
</gene>
<name>RH35B_ORYSJ</name>
<proteinExistence type="inferred from homology"/>